<keyword id="KW-0150">Chloroplast</keyword>
<keyword id="KW-0378">Hydrolase</keyword>
<keyword id="KW-0934">Plastid</keyword>
<keyword id="KW-1185">Reference proteome</keyword>
<keyword id="KW-0809">Transit peptide</keyword>
<dbReference type="EC" id="3.1.1.31"/>
<dbReference type="EMBL" id="CM000134">
    <property type="status" value="NOT_ANNOTATED_CDS"/>
    <property type="molecule type" value="Genomic_DNA"/>
</dbReference>
<dbReference type="SMR" id="A2Z3C4"/>
<dbReference type="STRING" id="39946.A2Z3C4"/>
<dbReference type="EnsemblPlants" id="OsKYG_09g0017200.01">
    <property type="protein sequence ID" value="OsKYG_09g0017200.01"/>
    <property type="gene ID" value="OsKYG_09g0017200"/>
</dbReference>
<dbReference type="EnsemblPlants" id="OsLaMu_09g0017280.01">
    <property type="protein sequence ID" value="OsLaMu_09g0017280.01"/>
    <property type="gene ID" value="OsLaMu_09g0017280"/>
</dbReference>
<dbReference type="EnsemblPlants" id="OsLima_09g0017420.01">
    <property type="protein sequence ID" value="OsLima_09g0017420.01"/>
    <property type="gene ID" value="OsLima_09g0017420"/>
</dbReference>
<dbReference type="EnsemblPlants" id="OsLiXu_09g0017150.01">
    <property type="protein sequence ID" value="OsLiXu_09g0017150.01"/>
    <property type="gene ID" value="OsLiXu_09g0017150"/>
</dbReference>
<dbReference type="Gramene" id="OsKYG_09g0017200.01">
    <property type="protein sequence ID" value="OsKYG_09g0017200.01"/>
    <property type="gene ID" value="OsKYG_09g0017200"/>
</dbReference>
<dbReference type="Gramene" id="OsLaMu_09g0017280.01">
    <property type="protein sequence ID" value="OsLaMu_09g0017280.01"/>
    <property type="gene ID" value="OsLaMu_09g0017280"/>
</dbReference>
<dbReference type="Gramene" id="OsLima_09g0017420.01">
    <property type="protein sequence ID" value="OsLima_09g0017420.01"/>
    <property type="gene ID" value="OsLima_09g0017420"/>
</dbReference>
<dbReference type="Gramene" id="OsLiXu_09g0017150.01">
    <property type="protein sequence ID" value="OsLiXu_09g0017150.01"/>
    <property type="gene ID" value="OsLiXu_09g0017150"/>
</dbReference>
<dbReference type="UniPathway" id="UPA00115">
    <property type="reaction ID" value="UER00409"/>
</dbReference>
<dbReference type="Proteomes" id="UP000007015">
    <property type="component" value="Chromosome 9"/>
</dbReference>
<dbReference type="GO" id="GO:0009507">
    <property type="term" value="C:chloroplast"/>
    <property type="evidence" value="ECO:0007669"/>
    <property type="project" value="UniProtKB-SubCell"/>
</dbReference>
<dbReference type="GO" id="GO:0017057">
    <property type="term" value="F:6-phosphogluconolactonase activity"/>
    <property type="evidence" value="ECO:0007669"/>
    <property type="project" value="UniProtKB-EC"/>
</dbReference>
<dbReference type="GO" id="GO:0005975">
    <property type="term" value="P:carbohydrate metabolic process"/>
    <property type="evidence" value="ECO:0007669"/>
    <property type="project" value="InterPro"/>
</dbReference>
<dbReference type="GO" id="GO:0006098">
    <property type="term" value="P:pentose-phosphate shunt"/>
    <property type="evidence" value="ECO:0007669"/>
    <property type="project" value="UniProtKB-UniPathway"/>
</dbReference>
<dbReference type="CDD" id="cd01400">
    <property type="entry name" value="6PGL"/>
    <property type="match status" value="1"/>
</dbReference>
<dbReference type="FunFam" id="3.40.50.1360:FF:000009">
    <property type="entry name" value="Probable 6-phosphogluconolactonase"/>
    <property type="match status" value="1"/>
</dbReference>
<dbReference type="Gene3D" id="3.40.50.1360">
    <property type="match status" value="1"/>
</dbReference>
<dbReference type="InterPro" id="IPR005900">
    <property type="entry name" value="6-phosphogluconolactonase_DevB"/>
</dbReference>
<dbReference type="InterPro" id="IPR006148">
    <property type="entry name" value="Glc/Gal-6P_isomerase"/>
</dbReference>
<dbReference type="InterPro" id="IPR037171">
    <property type="entry name" value="NagB/RpiA_transferase-like"/>
</dbReference>
<dbReference type="InterPro" id="IPR039104">
    <property type="entry name" value="PGLS"/>
</dbReference>
<dbReference type="NCBIfam" id="TIGR01198">
    <property type="entry name" value="pgl"/>
    <property type="match status" value="1"/>
</dbReference>
<dbReference type="PANTHER" id="PTHR11054">
    <property type="entry name" value="6-PHOSPHOGLUCONOLACTONASE"/>
    <property type="match status" value="1"/>
</dbReference>
<dbReference type="PANTHER" id="PTHR11054:SF22">
    <property type="entry name" value="6-PHOSPHOGLUCONOLACTONASE 3, CHLOROPLASTIC"/>
    <property type="match status" value="1"/>
</dbReference>
<dbReference type="Pfam" id="PF01182">
    <property type="entry name" value="Glucosamine_iso"/>
    <property type="match status" value="1"/>
</dbReference>
<dbReference type="SUPFAM" id="SSF100950">
    <property type="entry name" value="NagB/RpiA/CoA transferase-like"/>
    <property type="match status" value="1"/>
</dbReference>
<comment type="function">
    <text evidence="1">Hydrolysis of 6-phosphogluconolactone to 6-phosphogluconate.</text>
</comment>
<comment type="catalytic activity">
    <reaction>
        <text>6-phospho-D-glucono-1,5-lactone + H2O = 6-phospho-D-gluconate + H(+)</text>
        <dbReference type="Rhea" id="RHEA:12556"/>
        <dbReference type="ChEBI" id="CHEBI:15377"/>
        <dbReference type="ChEBI" id="CHEBI:15378"/>
        <dbReference type="ChEBI" id="CHEBI:57955"/>
        <dbReference type="ChEBI" id="CHEBI:58759"/>
        <dbReference type="EC" id="3.1.1.31"/>
    </reaction>
</comment>
<comment type="pathway">
    <text>Carbohydrate degradation; pentose phosphate pathway; D-ribulose 5-phosphate from D-glucose 6-phosphate (oxidative stage): step 2/3.</text>
</comment>
<comment type="subcellular location">
    <subcellularLocation>
        <location evidence="4">Plastid</location>
        <location evidence="4">Chloroplast</location>
    </subcellularLocation>
</comment>
<comment type="similarity">
    <text evidence="4">Belongs to the glucosamine/galactosamine-6-phosphate isomerase family. 6-phosphogluconolactonase subfamily.</text>
</comment>
<evidence type="ECO:0000250" key="1"/>
<evidence type="ECO:0000255" key="2"/>
<evidence type="ECO:0000256" key="3">
    <source>
        <dbReference type="SAM" id="MobiDB-lite"/>
    </source>
</evidence>
<evidence type="ECO:0000305" key="4"/>
<feature type="transit peptide" description="Chloroplast" evidence="2">
    <location>
        <begin position="1"/>
        <end position="61"/>
    </location>
</feature>
<feature type="chain" id="PRO_0000288679" description="Probable 6-phosphogluconolactonase 4, chloroplastic">
    <location>
        <begin position="62"/>
        <end position="324"/>
    </location>
</feature>
<feature type="region of interest" description="Disordered" evidence="3">
    <location>
        <begin position="20"/>
        <end position="43"/>
    </location>
</feature>
<feature type="compositionally biased region" description="Low complexity" evidence="3">
    <location>
        <begin position="24"/>
        <end position="34"/>
    </location>
</feature>
<accession>A2Z3C4</accession>
<name>6PGL4_ORYSI</name>
<protein>
    <recommendedName>
        <fullName>Probable 6-phosphogluconolactonase 4, chloroplastic</fullName>
        <shortName>6PGL 4</shortName>
        <ecNumber>3.1.1.31</ecNumber>
    </recommendedName>
</protein>
<reference key="1">
    <citation type="journal article" date="2005" name="PLoS Biol.">
        <title>The genomes of Oryza sativa: a history of duplications.</title>
        <authorList>
            <person name="Yu J."/>
            <person name="Wang J."/>
            <person name="Lin W."/>
            <person name="Li S."/>
            <person name="Li H."/>
            <person name="Zhou J."/>
            <person name="Ni P."/>
            <person name="Dong W."/>
            <person name="Hu S."/>
            <person name="Zeng C."/>
            <person name="Zhang J."/>
            <person name="Zhang Y."/>
            <person name="Li R."/>
            <person name="Xu Z."/>
            <person name="Li S."/>
            <person name="Li X."/>
            <person name="Zheng H."/>
            <person name="Cong L."/>
            <person name="Lin L."/>
            <person name="Yin J."/>
            <person name="Geng J."/>
            <person name="Li G."/>
            <person name="Shi J."/>
            <person name="Liu J."/>
            <person name="Lv H."/>
            <person name="Li J."/>
            <person name="Wang J."/>
            <person name="Deng Y."/>
            <person name="Ran L."/>
            <person name="Shi X."/>
            <person name="Wang X."/>
            <person name="Wu Q."/>
            <person name="Li C."/>
            <person name="Ren X."/>
            <person name="Wang J."/>
            <person name="Wang X."/>
            <person name="Li D."/>
            <person name="Liu D."/>
            <person name="Zhang X."/>
            <person name="Ji Z."/>
            <person name="Zhao W."/>
            <person name="Sun Y."/>
            <person name="Zhang Z."/>
            <person name="Bao J."/>
            <person name="Han Y."/>
            <person name="Dong L."/>
            <person name="Ji J."/>
            <person name="Chen P."/>
            <person name="Wu S."/>
            <person name="Liu J."/>
            <person name="Xiao Y."/>
            <person name="Bu D."/>
            <person name="Tan J."/>
            <person name="Yang L."/>
            <person name="Ye C."/>
            <person name="Zhang J."/>
            <person name="Xu J."/>
            <person name="Zhou Y."/>
            <person name="Yu Y."/>
            <person name="Zhang B."/>
            <person name="Zhuang S."/>
            <person name="Wei H."/>
            <person name="Liu B."/>
            <person name="Lei M."/>
            <person name="Yu H."/>
            <person name="Li Y."/>
            <person name="Xu H."/>
            <person name="Wei S."/>
            <person name="He X."/>
            <person name="Fang L."/>
            <person name="Zhang Z."/>
            <person name="Zhang Y."/>
            <person name="Huang X."/>
            <person name="Su Z."/>
            <person name="Tong W."/>
            <person name="Li J."/>
            <person name="Tong Z."/>
            <person name="Li S."/>
            <person name="Ye J."/>
            <person name="Wang L."/>
            <person name="Fang L."/>
            <person name="Lei T."/>
            <person name="Chen C.-S."/>
            <person name="Chen H.-C."/>
            <person name="Xu Z."/>
            <person name="Li H."/>
            <person name="Huang H."/>
            <person name="Zhang F."/>
            <person name="Xu H."/>
            <person name="Li N."/>
            <person name="Zhao C."/>
            <person name="Li S."/>
            <person name="Dong L."/>
            <person name="Huang Y."/>
            <person name="Li L."/>
            <person name="Xi Y."/>
            <person name="Qi Q."/>
            <person name="Li W."/>
            <person name="Zhang B."/>
            <person name="Hu W."/>
            <person name="Zhang Y."/>
            <person name="Tian X."/>
            <person name="Jiao Y."/>
            <person name="Liang X."/>
            <person name="Jin J."/>
            <person name="Gao L."/>
            <person name="Zheng W."/>
            <person name="Hao B."/>
            <person name="Liu S.-M."/>
            <person name="Wang W."/>
            <person name="Yuan L."/>
            <person name="Cao M."/>
            <person name="McDermott J."/>
            <person name="Samudrala R."/>
            <person name="Wang J."/>
            <person name="Wong G.K.-S."/>
            <person name="Yang H."/>
        </authorList>
    </citation>
    <scope>NUCLEOTIDE SEQUENCE [LARGE SCALE GENOMIC DNA]</scope>
    <source>
        <strain>cv. 93-11</strain>
    </source>
</reference>
<proteinExistence type="inferred from homology"/>
<organism>
    <name type="scientific">Oryza sativa subsp. indica</name>
    <name type="common">Rice</name>
    <dbReference type="NCBI Taxonomy" id="39946"/>
    <lineage>
        <taxon>Eukaryota</taxon>
        <taxon>Viridiplantae</taxon>
        <taxon>Streptophyta</taxon>
        <taxon>Embryophyta</taxon>
        <taxon>Tracheophyta</taxon>
        <taxon>Spermatophyta</taxon>
        <taxon>Magnoliopsida</taxon>
        <taxon>Liliopsida</taxon>
        <taxon>Poales</taxon>
        <taxon>Poaceae</taxon>
        <taxon>BOP clade</taxon>
        <taxon>Oryzoideae</taxon>
        <taxon>Oryzeae</taxon>
        <taxon>Oryzinae</taxon>
        <taxon>Oryza</taxon>
        <taxon>Oryza sativa</taxon>
    </lineage>
</organism>
<gene>
    <name type="ORF">OsI_031067</name>
</gene>
<sequence>MSVSAAVAAASTSRTLVLARRRSPPASRVAATSRGRPFSSGPHPLAVSPATRAPAMATDCAAAAAAAGSKKKKEVLIFDAEEDLAVSLAKYTAELSAKLAAERGAFTVVLSGGSLIKNIRKLAEPPYLDSVDWSKWHVFWVDERVVPKDHEDSNYKLALDGFLSKVPIPTGQVYAINDALSAEGAADDYETCLKQLVKNGVIAMSQSTGFPRFDVMLLGMGPDGHIASLFPGHPLVNENKKWVTYIKDSPKPPPERITFTFPVINSSAYVAMVVTGAGKAGAVQKALSDKQTSSDLLPVEMAVLQDGEFTWFTDKPAVSMLQNK</sequence>